<evidence type="ECO:0000255" key="1">
    <source>
        <dbReference type="HAMAP-Rule" id="MF_00152"/>
    </source>
</evidence>
<keyword id="KW-0227">DNA damage</keyword>
<keyword id="KW-0234">DNA repair</keyword>
<keyword id="KW-0255">Endonuclease</keyword>
<keyword id="KW-0378">Hydrolase</keyword>
<keyword id="KW-0479">Metal-binding</keyword>
<keyword id="KW-0540">Nuclease</keyword>
<keyword id="KW-0862">Zinc</keyword>
<gene>
    <name evidence="1" type="primary">nfo</name>
    <name type="ordered locus">TC_0914</name>
</gene>
<sequence length="288" mass="31813">MFVLPPPQEPLLGAHTSAAGGLHNALYEGRDIGATTIQLFTANQRQWKRRSLTQNMIEQFQTALDETSLSYIMSHAGYLNNPGAPNPEILEKTRICMYQEIADCIALGISFVNFHPGAALSDSKESCLDRAITSFSQMAPLFETNPPLVVLLETTAGQGSLIGSSFEELAYLIQGIKAHIPVGVCLDTCHIFAAGYDISSPEGWEQVLKHFDEVIGLSFLRAIHLNDSIFPLGKNKDRHAPIGEGCIGSESFCFLMRDERTRKLPKYLETPGGPDLWTKEIRYLQKVS</sequence>
<protein>
    <recommendedName>
        <fullName evidence="1">Probable endonuclease 4</fullName>
        <ecNumber evidence="1">3.1.21.2</ecNumber>
    </recommendedName>
    <alternativeName>
        <fullName evidence="1">Endodeoxyribonuclease IV</fullName>
    </alternativeName>
    <alternativeName>
        <fullName evidence="1">Endonuclease IV</fullName>
    </alternativeName>
</protein>
<reference key="1">
    <citation type="journal article" date="2000" name="Nucleic Acids Res.">
        <title>Genome sequences of Chlamydia trachomatis MoPn and Chlamydia pneumoniae AR39.</title>
        <authorList>
            <person name="Read T.D."/>
            <person name="Brunham R.C."/>
            <person name="Shen C."/>
            <person name="Gill S.R."/>
            <person name="Heidelberg J.F."/>
            <person name="White O."/>
            <person name="Hickey E.K."/>
            <person name="Peterson J.D."/>
            <person name="Utterback T.R."/>
            <person name="Berry K.J."/>
            <person name="Bass S."/>
            <person name="Linher K.D."/>
            <person name="Weidman J.F."/>
            <person name="Khouri H.M."/>
            <person name="Craven B."/>
            <person name="Bowman C."/>
            <person name="Dodson R.J."/>
            <person name="Gwinn M.L."/>
            <person name="Nelson W.C."/>
            <person name="DeBoy R.T."/>
            <person name="Kolonay J.F."/>
            <person name="McClarty G."/>
            <person name="Salzberg S.L."/>
            <person name="Eisen J.A."/>
            <person name="Fraser C.M."/>
        </authorList>
    </citation>
    <scope>NUCLEOTIDE SEQUENCE [LARGE SCALE GENOMIC DNA]</scope>
    <source>
        <strain>MoPn / Nigg</strain>
    </source>
</reference>
<comment type="function">
    <text evidence="1">Endonuclease IV plays a role in DNA repair. It cleaves phosphodiester bonds at apurinic or apyrimidinic (AP) sites, generating a 3'-hydroxyl group and a 5'-terminal sugar phosphate.</text>
</comment>
<comment type="catalytic activity">
    <reaction evidence="1">
        <text>Endonucleolytic cleavage to 5'-phosphooligonucleotide end-products.</text>
        <dbReference type="EC" id="3.1.21.2"/>
    </reaction>
</comment>
<comment type="cofactor">
    <cofactor evidence="1">
        <name>Zn(2+)</name>
        <dbReference type="ChEBI" id="CHEBI:29105"/>
    </cofactor>
    <text evidence="1">Binds 3 Zn(2+) ions.</text>
</comment>
<comment type="similarity">
    <text evidence="1">Belongs to the AP endonuclease 2 family.</text>
</comment>
<name>END4_CHLMU</name>
<accession>Q9PJB8</accession>
<organism>
    <name type="scientific">Chlamydia muridarum (strain MoPn / Nigg)</name>
    <dbReference type="NCBI Taxonomy" id="243161"/>
    <lineage>
        <taxon>Bacteria</taxon>
        <taxon>Pseudomonadati</taxon>
        <taxon>Chlamydiota</taxon>
        <taxon>Chlamydiia</taxon>
        <taxon>Chlamydiales</taxon>
        <taxon>Chlamydiaceae</taxon>
        <taxon>Chlamydia/Chlamydophila group</taxon>
        <taxon>Chlamydia</taxon>
    </lineage>
</organism>
<dbReference type="EC" id="3.1.21.2" evidence="1"/>
<dbReference type="EMBL" id="AE002160">
    <property type="protein sequence ID" value="AAF39706.1"/>
    <property type="molecule type" value="Genomic_DNA"/>
</dbReference>
<dbReference type="PIR" id="B81650">
    <property type="entry name" value="B81650"/>
</dbReference>
<dbReference type="RefSeq" id="WP_010231929.1">
    <property type="nucleotide sequence ID" value="NZ_CP063055.1"/>
</dbReference>
<dbReference type="SMR" id="Q9PJB8"/>
<dbReference type="GeneID" id="1246283"/>
<dbReference type="KEGG" id="cmu:TC_0914"/>
<dbReference type="eggNOG" id="COG0648">
    <property type="taxonomic scope" value="Bacteria"/>
</dbReference>
<dbReference type="HOGENOM" id="CLU_025885_0_1_0"/>
<dbReference type="OrthoDB" id="9805666at2"/>
<dbReference type="Proteomes" id="UP000000800">
    <property type="component" value="Chromosome"/>
</dbReference>
<dbReference type="GO" id="GO:0008833">
    <property type="term" value="F:deoxyribonuclease IV (phage-T4-induced) activity"/>
    <property type="evidence" value="ECO:0007669"/>
    <property type="project" value="UniProtKB-UniRule"/>
</dbReference>
<dbReference type="GO" id="GO:0003677">
    <property type="term" value="F:DNA binding"/>
    <property type="evidence" value="ECO:0007669"/>
    <property type="project" value="InterPro"/>
</dbReference>
<dbReference type="GO" id="GO:0003906">
    <property type="term" value="F:DNA-(apurinic or apyrimidinic site) endonuclease activity"/>
    <property type="evidence" value="ECO:0007669"/>
    <property type="project" value="TreeGrafter"/>
</dbReference>
<dbReference type="GO" id="GO:0008081">
    <property type="term" value="F:phosphoric diester hydrolase activity"/>
    <property type="evidence" value="ECO:0007669"/>
    <property type="project" value="TreeGrafter"/>
</dbReference>
<dbReference type="GO" id="GO:0008270">
    <property type="term" value="F:zinc ion binding"/>
    <property type="evidence" value="ECO:0007669"/>
    <property type="project" value="UniProtKB-UniRule"/>
</dbReference>
<dbReference type="GO" id="GO:0006284">
    <property type="term" value="P:base-excision repair"/>
    <property type="evidence" value="ECO:0007669"/>
    <property type="project" value="TreeGrafter"/>
</dbReference>
<dbReference type="CDD" id="cd00019">
    <property type="entry name" value="AP2Ec"/>
    <property type="match status" value="1"/>
</dbReference>
<dbReference type="FunFam" id="3.20.20.150:FF:000001">
    <property type="entry name" value="Probable endonuclease 4"/>
    <property type="match status" value="1"/>
</dbReference>
<dbReference type="Gene3D" id="3.20.20.150">
    <property type="entry name" value="Divalent-metal-dependent TIM barrel enzymes"/>
    <property type="match status" value="1"/>
</dbReference>
<dbReference type="HAMAP" id="MF_00152">
    <property type="entry name" value="Nfo"/>
    <property type="match status" value="1"/>
</dbReference>
<dbReference type="InterPro" id="IPR001719">
    <property type="entry name" value="AP_endonuc_2"/>
</dbReference>
<dbReference type="InterPro" id="IPR018246">
    <property type="entry name" value="AP_endonuc_F2_Zn_BS"/>
</dbReference>
<dbReference type="InterPro" id="IPR036237">
    <property type="entry name" value="Xyl_isomerase-like_sf"/>
</dbReference>
<dbReference type="InterPro" id="IPR013022">
    <property type="entry name" value="Xyl_isomerase-like_TIM-brl"/>
</dbReference>
<dbReference type="NCBIfam" id="TIGR00587">
    <property type="entry name" value="nfo"/>
    <property type="match status" value="1"/>
</dbReference>
<dbReference type="NCBIfam" id="NF002197">
    <property type="entry name" value="PRK01060.1-2"/>
    <property type="match status" value="1"/>
</dbReference>
<dbReference type="PANTHER" id="PTHR21445:SF0">
    <property type="entry name" value="APURINIC-APYRIMIDINIC ENDONUCLEASE"/>
    <property type="match status" value="1"/>
</dbReference>
<dbReference type="PANTHER" id="PTHR21445">
    <property type="entry name" value="ENDONUCLEASE IV ENDODEOXYRIBONUCLEASE IV"/>
    <property type="match status" value="1"/>
</dbReference>
<dbReference type="Pfam" id="PF01261">
    <property type="entry name" value="AP_endonuc_2"/>
    <property type="match status" value="1"/>
</dbReference>
<dbReference type="SMART" id="SM00518">
    <property type="entry name" value="AP2Ec"/>
    <property type="match status" value="1"/>
</dbReference>
<dbReference type="SUPFAM" id="SSF51658">
    <property type="entry name" value="Xylose isomerase-like"/>
    <property type="match status" value="1"/>
</dbReference>
<dbReference type="PROSITE" id="PS00729">
    <property type="entry name" value="AP_NUCLEASE_F2_1"/>
    <property type="match status" value="1"/>
</dbReference>
<dbReference type="PROSITE" id="PS00730">
    <property type="entry name" value="AP_NUCLEASE_F2_2"/>
    <property type="match status" value="1"/>
</dbReference>
<dbReference type="PROSITE" id="PS00731">
    <property type="entry name" value="AP_NUCLEASE_F2_3"/>
    <property type="match status" value="1"/>
</dbReference>
<dbReference type="PROSITE" id="PS51432">
    <property type="entry name" value="AP_NUCLEASE_F2_4"/>
    <property type="match status" value="1"/>
</dbReference>
<feature type="chain" id="PRO_0000190832" description="Probable endonuclease 4">
    <location>
        <begin position="1"/>
        <end position="288"/>
    </location>
</feature>
<feature type="binding site" evidence="1">
    <location>
        <position position="75"/>
    </location>
    <ligand>
        <name>Zn(2+)</name>
        <dbReference type="ChEBI" id="CHEBI:29105"/>
        <label>1</label>
    </ligand>
</feature>
<feature type="binding site" evidence="1">
    <location>
        <position position="115"/>
    </location>
    <ligand>
        <name>Zn(2+)</name>
        <dbReference type="ChEBI" id="CHEBI:29105"/>
        <label>1</label>
    </ligand>
</feature>
<feature type="binding site" evidence="1">
    <location>
        <position position="153"/>
    </location>
    <ligand>
        <name>Zn(2+)</name>
        <dbReference type="ChEBI" id="CHEBI:29105"/>
        <label>1</label>
    </ligand>
</feature>
<feature type="binding site" evidence="1">
    <location>
        <position position="153"/>
    </location>
    <ligand>
        <name>Zn(2+)</name>
        <dbReference type="ChEBI" id="CHEBI:29105"/>
        <label>2</label>
    </ligand>
</feature>
<feature type="binding site" evidence="1">
    <location>
        <position position="187"/>
    </location>
    <ligand>
        <name>Zn(2+)</name>
        <dbReference type="ChEBI" id="CHEBI:29105"/>
        <label>2</label>
    </ligand>
</feature>
<feature type="binding site" evidence="1">
    <location>
        <position position="190"/>
    </location>
    <ligand>
        <name>Zn(2+)</name>
        <dbReference type="ChEBI" id="CHEBI:29105"/>
        <label>3</label>
    </ligand>
</feature>
<feature type="binding site" evidence="1">
    <location>
        <position position="224"/>
    </location>
    <ligand>
        <name>Zn(2+)</name>
        <dbReference type="ChEBI" id="CHEBI:29105"/>
        <label>2</label>
    </ligand>
</feature>
<feature type="binding site" evidence="1">
    <location>
        <position position="237"/>
    </location>
    <ligand>
        <name>Zn(2+)</name>
        <dbReference type="ChEBI" id="CHEBI:29105"/>
        <label>3</label>
    </ligand>
</feature>
<feature type="binding site" evidence="1">
    <location>
        <position position="239"/>
    </location>
    <ligand>
        <name>Zn(2+)</name>
        <dbReference type="ChEBI" id="CHEBI:29105"/>
        <label>3</label>
    </ligand>
</feature>
<feature type="binding site" evidence="1">
    <location>
        <position position="269"/>
    </location>
    <ligand>
        <name>Zn(2+)</name>
        <dbReference type="ChEBI" id="CHEBI:29105"/>
        <label>2</label>
    </ligand>
</feature>
<proteinExistence type="inferred from homology"/>